<keyword id="KW-0150">Chloroplast</keyword>
<keyword id="KW-0934">Plastid</keyword>
<keyword id="KW-0687">Ribonucleoprotein</keyword>
<keyword id="KW-0689">Ribosomal protein</keyword>
<keyword id="KW-0694">RNA-binding</keyword>
<keyword id="KW-0699">rRNA-binding</keyword>
<protein>
    <recommendedName>
        <fullName evidence="1">Large ribosomal subunit protein uL14c</fullName>
    </recommendedName>
    <alternativeName>
        <fullName evidence="2">50S ribosomal protein L14, chloroplastic</fullName>
    </alternativeName>
</protein>
<name>RK14_LOBMA</name>
<evidence type="ECO:0000255" key="1">
    <source>
        <dbReference type="HAMAP-Rule" id="MF_01367"/>
    </source>
</evidence>
<evidence type="ECO:0000305" key="2"/>
<proteinExistence type="inferred from homology"/>
<comment type="function">
    <text evidence="1">Binds to 23S rRNA.</text>
</comment>
<comment type="subunit">
    <text evidence="1">Part of the 50S ribosomal subunit.</text>
</comment>
<comment type="subcellular location">
    <subcellularLocation>
        <location>Plastid</location>
        <location>Chloroplast</location>
    </subcellularLocation>
</comment>
<comment type="similarity">
    <text evidence="1">Belongs to the universal ribosomal protein uL14 family.</text>
</comment>
<gene>
    <name evidence="1" type="primary">rpl14</name>
</gene>
<feature type="chain" id="PRO_0000355888" description="Large ribosomal subunit protein uL14c">
    <location>
        <begin position="1"/>
        <end position="122"/>
    </location>
</feature>
<organism>
    <name type="scientific">Lobularia maritima</name>
    <name type="common">Sweet alyssum</name>
    <name type="synonym">Alyssum maritimum</name>
    <dbReference type="NCBI Taxonomy" id="226051"/>
    <lineage>
        <taxon>Eukaryota</taxon>
        <taxon>Viridiplantae</taxon>
        <taxon>Streptophyta</taxon>
        <taxon>Embryophyta</taxon>
        <taxon>Tracheophyta</taxon>
        <taxon>Spermatophyta</taxon>
        <taxon>Magnoliopsida</taxon>
        <taxon>eudicotyledons</taxon>
        <taxon>Gunneridae</taxon>
        <taxon>Pentapetalae</taxon>
        <taxon>rosids</taxon>
        <taxon>malvids</taxon>
        <taxon>Brassicales</taxon>
        <taxon>Brassicaceae</taxon>
        <taxon>Anastaticeae</taxon>
        <taxon>Lobularia</taxon>
    </lineage>
</organism>
<reference key="1">
    <citation type="submission" date="2007-03" db="EMBL/GenBank/DDBJ databases">
        <title>Sequencing analysis of Lobularia maritima chloroplast DNA.</title>
        <authorList>
            <person name="Hosouchi T."/>
            <person name="Tsuruoka H."/>
            <person name="Kotani H."/>
        </authorList>
    </citation>
    <scope>NUCLEOTIDE SEQUENCE [LARGE SCALE GENOMIC DNA]</scope>
</reference>
<accession>A4QLN0</accession>
<geneLocation type="chloroplast"/>
<dbReference type="EMBL" id="AP009375">
    <property type="protein sequence ID" value="BAF50585.1"/>
    <property type="molecule type" value="Genomic_DNA"/>
</dbReference>
<dbReference type="RefSeq" id="YP_001123761.1">
    <property type="nucleotide sequence ID" value="NC_009274.1"/>
</dbReference>
<dbReference type="SMR" id="A4QLN0"/>
<dbReference type="GeneID" id="4964890"/>
<dbReference type="GO" id="GO:0009507">
    <property type="term" value="C:chloroplast"/>
    <property type="evidence" value="ECO:0007669"/>
    <property type="project" value="UniProtKB-SubCell"/>
</dbReference>
<dbReference type="GO" id="GO:0022625">
    <property type="term" value="C:cytosolic large ribosomal subunit"/>
    <property type="evidence" value="ECO:0007669"/>
    <property type="project" value="TreeGrafter"/>
</dbReference>
<dbReference type="GO" id="GO:0070180">
    <property type="term" value="F:large ribosomal subunit rRNA binding"/>
    <property type="evidence" value="ECO:0007669"/>
    <property type="project" value="TreeGrafter"/>
</dbReference>
<dbReference type="GO" id="GO:0003735">
    <property type="term" value="F:structural constituent of ribosome"/>
    <property type="evidence" value="ECO:0007669"/>
    <property type="project" value="InterPro"/>
</dbReference>
<dbReference type="GO" id="GO:0006412">
    <property type="term" value="P:translation"/>
    <property type="evidence" value="ECO:0007669"/>
    <property type="project" value="UniProtKB-UniRule"/>
</dbReference>
<dbReference type="CDD" id="cd00337">
    <property type="entry name" value="Ribosomal_uL14"/>
    <property type="match status" value="1"/>
</dbReference>
<dbReference type="FunFam" id="2.40.150.20:FF:000002">
    <property type="entry name" value="50S ribosomal protein L14, chloroplastic"/>
    <property type="match status" value="1"/>
</dbReference>
<dbReference type="Gene3D" id="2.40.150.20">
    <property type="entry name" value="Ribosomal protein L14"/>
    <property type="match status" value="1"/>
</dbReference>
<dbReference type="HAMAP" id="MF_01367">
    <property type="entry name" value="Ribosomal_uL14"/>
    <property type="match status" value="1"/>
</dbReference>
<dbReference type="InterPro" id="IPR000218">
    <property type="entry name" value="Ribosomal_uL14"/>
</dbReference>
<dbReference type="InterPro" id="IPR005745">
    <property type="entry name" value="Ribosomal_uL14_bac-type"/>
</dbReference>
<dbReference type="InterPro" id="IPR019972">
    <property type="entry name" value="Ribosomal_uL14_CS"/>
</dbReference>
<dbReference type="InterPro" id="IPR036853">
    <property type="entry name" value="Ribosomal_uL14_sf"/>
</dbReference>
<dbReference type="NCBIfam" id="TIGR01067">
    <property type="entry name" value="rplN_bact"/>
    <property type="match status" value="1"/>
</dbReference>
<dbReference type="PANTHER" id="PTHR11761">
    <property type="entry name" value="50S/60S RIBOSOMAL PROTEIN L14/L23"/>
    <property type="match status" value="1"/>
</dbReference>
<dbReference type="PANTHER" id="PTHR11761:SF3">
    <property type="entry name" value="LARGE RIBOSOMAL SUBUNIT PROTEIN UL14M"/>
    <property type="match status" value="1"/>
</dbReference>
<dbReference type="Pfam" id="PF00238">
    <property type="entry name" value="Ribosomal_L14"/>
    <property type="match status" value="1"/>
</dbReference>
<dbReference type="SMART" id="SM01374">
    <property type="entry name" value="Ribosomal_L14"/>
    <property type="match status" value="1"/>
</dbReference>
<dbReference type="SUPFAM" id="SSF50193">
    <property type="entry name" value="Ribosomal protein L14"/>
    <property type="match status" value="1"/>
</dbReference>
<dbReference type="PROSITE" id="PS00049">
    <property type="entry name" value="RIBOSOMAL_L14"/>
    <property type="match status" value="1"/>
</dbReference>
<sequence>MIQPQTYLNVADNSGARELMCIRIIGASNRRYAHIGDVIVAVIKEAIPNTPLERSEVIRAVIVRTCKELKRNNGTIIRYDDNAAVVIDQEGNPKGTRVFGAIPRELRQLNFTKIVSLAPEVL</sequence>